<comment type="function">
    <text evidence="1 3">5'-&gt;3' exonuclease that hydrolyzes the phosphodiester bond of single-stranded DNA (ssDNA) and RNA molecules to form nucleoside 3'-monophosphates and 5'-end 5'-hydroxy deoxyribonucleotide/ribonucleotide fragments. Partially redundant with PLD4, can cleave all four nucleotides displaying higher efficiency for ssDNA and RNA fragments initiated with uridine and guanosine residues and lower efficiency for cytidine-initiated substrates. As a result, it does not always degrade polynucleotides to the single nucleotide level, it can stall at specific sites sparing certain fragments from exonucleolytic degradation. Processes self and pathogenic ssDNA and RNA molecules that reach the endolysosomal compartment via phagocytosis or autophagy and may serve as 'danger' signals for recognition by innate immune receptors such as toll-like receptors (TLRs). Degrades mitochondrial CpG-rich ssDNA fragments to prevent TLR9 activation and autoinflammatory response, but it can cleave viral RNA to generate ligands for TLR7 activation and initiate antiviral immune responses. In plasmacytoid dendritic cells, it cooperates with endonuclease RNASET2 to release 2',3'-cyclic guanosine monophosphate (2',3'-cGMP), a potent stimulatory ligand for TLR7. Produces 2',3'-cGMPs and cytidine-rich RNA fragments that occupy TLR7 ligand-binding pockets and trigger a signaling-competent state. Can exert polynucleotide phosphatase activity toward 5'-phosphorylated ssDNA substrates although at a slow rate. Transphosphatidylase that catalyzes the exchange with R to S stereo-inversion of the glycerol moiety between (S,R)-lysophosphatidylglycerol (LPG) and monoacylglycerol (MAG) substrates to yield (S,S)-bis(monoacylglycero)phosphate (BMP). Can synthesize a variety of (S,S)-BMPs representing the main phospholipid constituent of lysosomal intralumenal vesicle (ILV) membranes that bind acid hydrolases for lipid degradation. Regulates the homeostasis and interorganellar communication of the endolysosomal system with an overall impact on cellular removal of dysfunctional organelles via autophagy as well as proper protein and lipid turnover. May play a role in myotube formation in response to ER stress.</text>
</comment>
<comment type="catalytic activity">
    <reaction evidence="3">
        <text>Exonucleolytic cleavage in the 5'- to 3'-direction to yield nucleoside 3'-phosphates.</text>
        <dbReference type="EC" id="3.1.16.1"/>
    </reaction>
</comment>
<comment type="catalytic activity">
    <reaction evidence="3">
        <text>a 5'-end 5'-dephospho-ribonucleotidyl-ribonucleotide-RNA + H2O = a ribonucleoside 3'-phosphate + a 5'-end dephospho-ribonucleoside-RNA + H(+)</text>
        <dbReference type="Rhea" id="RHEA:81375"/>
        <dbReference type="Rhea" id="RHEA-COMP:13936"/>
        <dbReference type="Rhea" id="RHEA-COMP:19670"/>
        <dbReference type="ChEBI" id="CHEBI:13197"/>
        <dbReference type="ChEBI" id="CHEBI:15377"/>
        <dbReference type="ChEBI" id="CHEBI:15378"/>
        <dbReference type="ChEBI" id="CHEBI:138284"/>
        <dbReference type="ChEBI" id="CHEBI:231871"/>
    </reaction>
    <physiologicalReaction direction="left-to-right" evidence="3">
        <dbReference type="Rhea" id="RHEA:81376"/>
    </physiologicalReaction>
</comment>
<comment type="catalytic activity">
    <reaction evidence="3">
        <text>a ribonucleoside 3'-phosphate-2'-3'-cyclophospho-GMP + H2O = a ribonucleoside 3'-phosphate + 2',3'-cyclophospho-GMP + H(+)</text>
        <dbReference type="Rhea" id="RHEA:81319"/>
        <dbReference type="ChEBI" id="CHEBI:13197"/>
        <dbReference type="ChEBI" id="CHEBI:15377"/>
        <dbReference type="ChEBI" id="CHEBI:15378"/>
        <dbReference type="ChEBI" id="CHEBI:60837"/>
        <dbReference type="ChEBI" id="CHEBI:231870"/>
    </reaction>
    <physiologicalReaction direction="left-to-right" evidence="3">
        <dbReference type="Rhea" id="RHEA:81320"/>
    </physiologicalReaction>
</comment>
<comment type="catalytic activity">
    <reaction evidence="3">
        <text>a 5'-end 5'-dephospho-2'-deoxyribonucleotidyl-2'-deoxyribonucleotide in single-stranded DNA + H2O = a 5'-end dephospho-2'-deoxyribonucleoside in single-stranded DNA + a 2'-deoxyribonucleoside 3'-phosphate + H(+)</text>
        <dbReference type="Rhea" id="RHEA:81379"/>
        <dbReference type="Rhea" id="RHEA-COMP:19701"/>
        <dbReference type="Rhea" id="RHEA-COMP:19702"/>
        <dbReference type="ChEBI" id="CHEBI:15377"/>
        <dbReference type="ChEBI" id="CHEBI:15378"/>
        <dbReference type="ChEBI" id="CHEBI:131705"/>
        <dbReference type="ChEBI" id="CHEBI:136416"/>
        <dbReference type="ChEBI" id="CHEBI:231873"/>
    </reaction>
    <physiologicalReaction direction="left-to-right" evidence="3">
        <dbReference type="Rhea" id="RHEA:81380"/>
    </physiologicalReaction>
</comment>
<comment type="catalytic activity">
    <reaction evidence="3">
        <text>a 5'-end 5'-phospho-2'-deoxyribonucleotide in single-stranded DNA + H2O = a 5'-end 5'-dephospho-2'-deoxyribonucleotide in single-stranded DNA + phosphate</text>
        <dbReference type="Rhea" id="RHEA:82335"/>
        <dbReference type="Rhea" id="RHEA-COMP:19868"/>
        <dbReference type="Rhea" id="RHEA-COMP:19869"/>
        <dbReference type="ChEBI" id="CHEBI:15377"/>
        <dbReference type="ChEBI" id="CHEBI:43474"/>
        <dbReference type="ChEBI" id="CHEBI:136412"/>
        <dbReference type="ChEBI" id="CHEBI:136416"/>
    </reaction>
    <physiologicalReaction direction="left-to-right" evidence="3">
        <dbReference type="Rhea" id="RHEA:82336"/>
    </physiologicalReaction>
</comment>
<comment type="catalytic activity">
    <reaction evidence="3">
        <text>a 3-lyso-sn-glycero-1-phospho-(3'-acyl-1'-sn-glycerol) + a 1-acyl-sn-glycerol = a 3-acyl-sn-glycero-1-phospho-(3'-acyl-1'-sn-glycerol) + glycerol</text>
        <dbReference type="Rhea" id="RHEA:82563"/>
        <dbReference type="ChEBI" id="CHEBI:17754"/>
        <dbReference type="ChEBI" id="CHEBI:64683"/>
        <dbReference type="ChEBI" id="CHEBI:77717"/>
        <dbReference type="ChEBI" id="CHEBI:232393"/>
    </reaction>
    <physiologicalReaction direction="left-to-right" evidence="3">
        <dbReference type="Rhea" id="RHEA:82564"/>
    </physiologicalReaction>
</comment>
<comment type="catalytic activity">
    <reaction evidence="3">
        <text>3-lyso-sn-glycero-1-phospho-(3'-(9Z-octadecenoyl)-1'-sn-glycerol) + 1-(9Z-octadecenoyl)-sn-glycerol = 3-(9Z-octadecenoyl)-sn-glycero-1-phospho-(3'-(9Z-octadecenoyl)-1'-sn-glycerol) + glycerol</text>
        <dbReference type="Rhea" id="RHEA:82567"/>
        <dbReference type="ChEBI" id="CHEBI:17754"/>
        <dbReference type="ChEBI" id="CHEBI:75757"/>
        <dbReference type="ChEBI" id="CHEBI:139150"/>
        <dbReference type="ChEBI" id="CHEBI:232394"/>
    </reaction>
    <physiologicalReaction direction="left-to-right" evidence="3">
        <dbReference type="Rhea" id="RHEA:82568"/>
    </physiologicalReaction>
</comment>
<comment type="subunit">
    <text evidence="3">Homodimer. Interacts with APP.</text>
</comment>
<comment type="subcellular location">
    <subcellularLocation>
        <location evidence="3">Endoplasmic reticulum membrane</location>
        <topology evidence="3">Single-pass type II membrane protein</topology>
    </subcellularLocation>
    <subcellularLocation>
        <location evidence="3">Lysosome lumen</location>
    </subcellularLocation>
    <subcellularLocation>
        <location evidence="3">Early endosome membrane</location>
        <topology evidence="3">Single-pass type II membrane protein</topology>
    </subcellularLocation>
    <subcellularLocation>
        <location evidence="3">Late endosome membrane</location>
        <topology evidence="3">Single-pass type II membrane protein</topology>
    </subcellularLocation>
    <subcellularLocation>
        <location evidence="3">Golgi apparatus membrane</location>
        <topology evidence="3">Single-pass type II membrane protein</topology>
    </subcellularLocation>
    <subcellularLocation>
        <location evidence="3">Endosome membrane</location>
        <topology evidence="3">Single-pass type II membrane protein</topology>
    </subcellularLocation>
    <text evidence="3">Localizes to ER-associated vesicles in differentiating myotubes. Sorted into intralumenal vesicles (ILVs) in lysosomes. The soluble form in lysosome arises by proteolytic processing of the membrane-bound form. Colocalizes with APP in endosomes.</text>
</comment>
<comment type="domain">
    <text evidence="3">The catalytic domain contains two conserved PLD phosphodiesterase HxK(x4)D(E) motifs that accomodate the phosphate group of the nucleic acid substrates, with one nucleophile histidine residue forming a phosphohistidine intermediate and the other histidine protonating the leaving 5'-OH ssDNA/RNA fragment, resulting in the cleavage of the phosphodiester bond. The homodimer has two independent catalytic domains arranged at the dimer interface.</text>
</comment>
<comment type="PTM">
    <text evidence="3">N-glycosylated.</text>
</comment>
<comment type="PTM">
    <text evidence="3">Proteolytically processed to a soluble form that is stable within endosomes and lysosomes. During transport through the secretory pathway becomes proteolysed by cysteine proteases, thereby releasing a stable soluble lysosomal lumenal polypeptide, whereas the transmembrane-bound fragment is rapidly degraded. Its transport route to lysosomes involves ubiquitination and the ESCRT complex.</text>
</comment>
<comment type="PTM">
    <text evidence="3">Ubiquitinated. Ubiquitination mediates sorting into lysosomes.</text>
</comment>
<comment type="similarity">
    <text evidence="5">Belongs to the phospholipase D family.</text>
</comment>
<comment type="caution">
    <text evidence="1 2">It was initially thought that PDL3 has phospholipase D activity due to its HKD motifs. The second HKD motif contains Glu instead of the canonical Asp. Its enzyme activity is therefore unsure. Catalytic phospholipase D activity is still controversial (By similarity). Its closest homolog PLD4, exhibits no phospholipase activity (By similarity).</text>
</comment>
<name>PLD3_PONAB</name>
<proteinExistence type="evidence at transcript level"/>
<sequence length="490" mass="54702">MKPKLMYQELKVPAEEPANELPMNEIEAWKAAEKKARWVLLVLILAVVGFGALMTQLFLWEYGDLHLFGPNQRPAPCYDPCEAVLVESIPEGLDFPNASTGNPSTSQAWLGLLAGAHSSLDIASFYWTLTNNDTHTQEPSAQQGEEVLRQLQTLAPKGVNVRIAVSKPNGPQPQADLQALLQSGAQVRMVDMQKLTHGVLHTKFWVVDQTHFYLGSANMDWRSLTQVKELGVVMYNCSCLARDLTKIFEAYWFLGQAGSSIPSTWPRFYDTRYNQETPMEICLNGTPALAYLASAPPPLCPSGRTPDLKALLNVVDNARSFIYVAVMNYLPTLEFSHPHRFWPAIDDGLRRAAYERGVKVRLLISCWGHSEPSMRAFLLSLAALRDNHTHSDIQVKLFVVPADEAQARIPYARVNHNKYMVTERATYIGTSNWSGNYFTETAGTSLLVTQNGRGGLRSQLEAIFLRDWDSPYSHDLDTSADSVGNACRLL</sequence>
<dbReference type="EC" id="3.1.16.1" evidence="3"/>
<dbReference type="EC" id="3.1.4.-" evidence="3"/>
<dbReference type="EMBL" id="CR861101">
    <property type="protein sequence ID" value="CAH93179.1"/>
    <property type="molecule type" value="mRNA"/>
</dbReference>
<dbReference type="EMBL" id="CR861179">
    <property type="protein sequence ID" value="CAH93251.1"/>
    <property type="molecule type" value="mRNA"/>
</dbReference>
<dbReference type="RefSeq" id="NP_001126871.1">
    <property type="nucleotide sequence ID" value="NM_001133399.1"/>
</dbReference>
<dbReference type="RefSeq" id="XP_009230868.1">
    <property type="nucleotide sequence ID" value="XM_009232593.1"/>
</dbReference>
<dbReference type="RefSeq" id="XP_009230869.1">
    <property type="nucleotide sequence ID" value="XM_009232594.1"/>
</dbReference>
<dbReference type="RefSeq" id="XP_009230870.1">
    <property type="nucleotide sequence ID" value="XM_009232595.1"/>
</dbReference>
<dbReference type="RefSeq" id="XP_009230872.1">
    <property type="nucleotide sequence ID" value="XM_009232597.1"/>
</dbReference>
<dbReference type="RefSeq" id="XP_009230873.1">
    <property type="nucleotide sequence ID" value="XM_009232598.1"/>
</dbReference>
<dbReference type="RefSeq" id="XP_009230874.1">
    <property type="nucleotide sequence ID" value="XM_009232599.1"/>
</dbReference>
<dbReference type="RefSeq" id="XP_009230875.1">
    <property type="nucleotide sequence ID" value="XM_009232600.1"/>
</dbReference>
<dbReference type="RefSeq" id="XP_009230876.1">
    <property type="nucleotide sequence ID" value="XM_009232601.1"/>
</dbReference>
<dbReference type="RefSeq" id="XP_063575210.1">
    <property type="nucleotide sequence ID" value="XM_063719140.1"/>
</dbReference>
<dbReference type="RefSeq" id="XP_063575211.1">
    <property type="nucleotide sequence ID" value="XM_063719141.1"/>
</dbReference>
<dbReference type="RefSeq" id="XP_063575212.1">
    <property type="nucleotide sequence ID" value="XM_063719142.1"/>
</dbReference>
<dbReference type="RefSeq" id="XP_063575213.1">
    <property type="nucleotide sequence ID" value="XM_063719143.1"/>
</dbReference>
<dbReference type="RefSeq" id="XP_063575214.1">
    <property type="nucleotide sequence ID" value="XM_063719144.1"/>
</dbReference>
<dbReference type="RefSeq" id="XP_063575215.1">
    <property type="nucleotide sequence ID" value="XM_063719145.1"/>
</dbReference>
<dbReference type="RefSeq" id="XP_063575216.1">
    <property type="nucleotide sequence ID" value="XM_063719146.1"/>
</dbReference>
<dbReference type="RefSeq" id="XP_063575217.1">
    <property type="nucleotide sequence ID" value="XM_063719147.1"/>
</dbReference>
<dbReference type="RefSeq" id="XP_063575218.1">
    <property type="nucleotide sequence ID" value="XM_063719148.1"/>
</dbReference>
<dbReference type="RefSeq" id="XP_063575219.1">
    <property type="nucleotide sequence ID" value="XM_063719149.1"/>
</dbReference>
<dbReference type="RefSeq" id="XP_063575220.1">
    <property type="nucleotide sequence ID" value="XM_063719150.1"/>
</dbReference>
<dbReference type="RefSeq" id="XP_063575221.1">
    <property type="nucleotide sequence ID" value="XM_063719151.1"/>
</dbReference>
<dbReference type="RefSeq" id="XP_063575222.1">
    <property type="nucleotide sequence ID" value="XM_063719152.1"/>
</dbReference>
<dbReference type="RefSeq" id="XP_063575223.1">
    <property type="nucleotide sequence ID" value="XM_063719153.1"/>
</dbReference>
<dbReference type="RefSeq" id="XP_063575224.1">
    <property type="nucleotide sequence ID" value="XM_063719154.1"/>
</dbReference>
<dbReference type="RefSeq" id="XP_063575226.1">
    <property type="nucleotide sequence ID" value="XM_063719156.1"/>
</dbReference>
<dbReference type="RefSeq" id="XP_063575227.1">
    <property type="nucleotide sequence ID" value="XM_063719157.1"/>
</dbReference>
<dbReference type="RefSeq" id="XP_063575228.1">
    <property type="nucleotide sequence ID" value="XM_063719158.1"/>
</dbReference>
<dbReference type="RefSeq" id="XP_063575229.1">
    <property type="nucleotide sequence ID" value="XM_063719159.1"/>
</dbReference>
<dbReference type="RefSeq" id="XP_063575230.1">
    <property type="nucleotide sequence ID" value="XM_063719160.1"/>
</dbReference>
<dbReference type="RefSeq" id="XP_063575231.1">
    <property type="nucleotide sequence ID" value="XM_063719161.1"/>
</dbReference>
<dbReference type="RefSeq" id="XP_063575232.1">
    <property type="nucleotide sequence ID" value="XM_063719162.1"/>
</dbReference>
<dbReference type="RefSeq" id="XP_063575233.1">
    <property type="nucleotide sequence ID" value="XM_063719163.1"/>
</dbReference>
<dbReference type="RefSeq" id="XP_063575234.1">
    <property type="nucleotide sequence ID" value="XM_063719164.1"/>
</dbReference>
<dbReference type="RefSeq" id="XP_063575235.1">
    <property type="nucleotide sequence ID" value="XM_063719165.1"/>
</dbReference>
<dbReference type="RefSeq" id="XP_063575236.1">
    <property type="nucleotide sequence ID" value="XM_063719166.1"/>
</dbReference>
<dbReference type="RefSeq" id="XP_063575237.1">
    <property type="nucleotide sequence ID" value="XM_063719167.1"/>
</dbReference>
<dbReference type="RefSeq" id="XP_063575238.1">
    <property type="nucleotide sequence ID" value="XM_063719168.1"/>
</dbReference>
<dbReference type="RefSeq" id="XP_063575239.1">
    <property type="nucleotide sequence ID" value="XM_063719169.1"/>
</dbReference>
<dbReference type="RefSeq" id="XP_063575240.1">
    <property type="nucleotide sequence ID" value="XM_063719170.1"/>
</dbReference>
<dbReference type="RefSeq" id="XP_063575241.1">
    <property type="nucleotide sequence ID" value="XM_063719171.1"/>
</dbReference>
<dbReference type="RefSeq" id="XP_063575242.1">
    <property type="nucleotide sequence ID" value="XM_063719172.1"/>
</dbReference>
<dbReference type="RefSeq" id="XP_063575243.1">
    <property type="nucleotide sequence ID" value="XM_063719173.1"/>
</dbReference>
<dbReference type="RefSeq" id="XP_063575244.1">
    <property type="nucleotide sequence ID" value="XM_063719174.1"/>
</dbReference>
<dbReference type="RefSeq" id="XP_063575245.1">
    <property type="nucleotide sequence ID" value="XM_063719175.1"/>
</dbReference>
<dbReference type="RefSeq" id="XP_063575246.1">
    <property type="nucleotide sequence ID" value="XM_063719176.1"/>
</dbReference>
<dbReference type="RefSeq" id="XP_063575247.1">
    <property type="nucleotide sequence ID" value="XM_063719177.1"/>
</dbReference>
<dbReference type="RefSeq" id="XP_063575248.1">
    <property type="nucleotide sequence ID" value="XM_063719178.1"/>
</dbReference>
<dbReference type="RefSeq" id="XP_063575249.1">
    <property type="nucleotide sequence ID" value="XM_063719179.1"/>
</dbReference>
<dbReference type="RefSeq" id="XP_063575250.1">
    <property type="nucleotide sequence ID" value="XM_063719180.1"/>
</dbReference>
<dbReference type="RefSeq" id="XP_063575251.1">
    <property type="nucleotide sequence ID" value="XM_063719181.1"/>
</dbReference>
<dbReference type="RefSeq" id="XP_063575252.1">
    <property type="nucleotide sequence ID" value="XM_063719182.1"/>
</dbReference>
<dbReference type="RefSeq" id="XP_063575253.1">
    <property type="nucleotide sequence ID" value="XM_063719183.1"/>
</dbReference>
<dbReference type="RefSeq" id="XP_063575254.1">
    <property type="nucleotide sequence ID" value="XM_063719184.1"/>
</dbReference>
<dbReference type="RefSeq" id="XP_063575255.1">
    <property type="nucleotide sequence ID" value="XM_063719185.1"/>
</dbReference>
<dbReference type="RefSeq" id="XP_063575256.1">
    <property type="nucleotide sequence ID" value="XM_063719186.1"/>
</dbReference>
<dbReference type="RefSeq" id="XP_063575257.1">
    <property type="nucleotide sequence ID" value="XM_063719187.1"/>
</dbReference>
<dbReference type="RefSeq" id="XP_063575258.1">
    <property type="nucleotide sequence ID" value="XM_063719188.1"/>
</dbReference>
<dbReference type="RefSeq" id="XP_063575259.1">
    <property type="nucleotide sequence ID" value="XM_063719189.1"/>
</dbReference>
<dbReference type="SMR" id="Q5R4Y7"/>
<dbReference type="FunCoup" id="Q5R4Y7">
    <property type="interactions" value="866"/>
</dbReference>
<dbReference type="STRING" id="9601.ENSPPYP00000011181"/>
<dbReference type="GlyCosmos" id="Q5R4Y7">
    <property type="glycosylation" value="1 site, No reported glycans"/>
</dbReference>
<dbReference type="Ensembl" id="ENSPPYT00000011618.3">
    <property type="protein sequence ID" value="ENSPPYP00000011181.2"/>
    <property type="gene ID" value="ENSPPYG00000009988.3"/>
</dbReference>
<dbReference type="GeneID" id="100173883"/>
<dbReference type="KEGG" id="pon:100173883"/>
<dbReference type="CTD" id="23646"/>
<dbReference type="eggNOG" id="KOG3603">
    <property type="taxonomic scope" value="Eukaryota"/>
</dbReference>
<dbReference type="GeneTree" id="ENSGT00950000183059"/>
<dbReference type="HOGENOM" id="CLU_027021_0_0_1"/>
<dbReference type="InParanoid" id="Q5R4Y7"/>
<dbReference type="OMA" id="RDNHTHF"/>
<dbReference type="OrthoDB" id="1923775at2759"/>
<dbReference type="TreeFam" id="TF313378"/>
<dbReference type="Proteomes" id="UP000001595">
    <property type="component" value="Chromosome 19"/>
</dbReference>
<dbReference type="GO" id="GO:0031901">
    <property type="term" value="C:early endosome membrane"/>
    <property type="evidence" value="ECO:0000250"/>
    <property type="project" value="UniProtKB"/>
</dbReference>
<dbReference type="GO" id="GO:0005789">
    <property type="term" value="C:endoplasmic reticulum membrane"/>
    <property type="evidence" value="ECO:0000250"/>
    <property type="project" value="UniProtKB"/>
</dbReference>
<dbReference type="GO" id="GO:0000139">
    <property type="term" value="C:Golgi membrane"/>
    <property type="evidence" value="ECO:0000250"/>
    <property type="project" value="UniProtKB"/>
</dbReference>
<dbReference type="GO" id="GO:0031902">
    <property type="term" value="C:late endosome membrane"/>
    <property type="evidence" value="ECO:0000250"/>
    <property type="project" value="UniProtKB"/>
</dbReference>
<dbReference type="GO" id="GO:0043202">
    <property type="term" value="C:lysosomal lumen"/>
    <property type="evidence" value="ECO:0000250"/>
    <property type="project" value="UniProtKB"/>
</dbReference>
<dbReference type="GO" id="GO:0005765">
    <property type="term" value="C:lysosomal membrane"/>
    <property type="evidence" value="ECO:0007669"/>
    <property type="project" value="Ensembl"/>
</dbReference>
<dbReference type="GO" id="GO:0046872">
    <property type="term" value="F:metal ion binding"/>
    <property type="evidence" value="ECO:0007669"/>
    <property type="project" value="UniProtKB-KW"/>
</dbReference>
<dbReference type="GO" id="GO:0045145">
    <property type="term" value="F:single-stranded DNA 5'-3' DNA exonuclease activity"/>
    <property type="evidence" value="ECO:0000250"/>
    <property type="project" value="UniProtKB"/>
</dbReference>
<dbReference type="GO" id="GO:0002376">
    <property type="term" value="P:immune system process"/>
    <property type="evidence" value="ECO:0007669"/>
    <property type="project" value="UniProtKB-KW"/>
</dbReference>
<dbReference type="GO" id="GO:0006954">
    <property type="term" value="P:inflammatory response"/>
    <property type="evidence" value="ECO:0007669"/>
    <property type="project" value="UniProtKB-KW"/>
</dbReference>
<dbReference type="GO" id="GO:0006629">
    <property type="term" value="P:lipid metabolic process"/>
    <property type="evidence" value="ECO:0007669"/>
    <property type="project" value="UniProtKB-KW"/>
</dbReference>
<dbReference type="GO" id="GO:0014902">
    <property type="term" value="P:myotube differentiation"/>
    <property type="evidence" value="ECO:0000250"/>
    <property type="project" value="UniProtKB"/>
</dbReference>
<dbReference type="GO" id="GO:1900015">
    <property type="term" value="P:regulation of cytokine production involved in inflammatory response"/>
    <property type="evidence" value="ECO:0007669"/>
    <property type="project" value="Ensembl"/>
</dbReference>
<dbReference type="CDD" id="cd09144">
    <property type="entry name" value="PLDc_vPLD3_1"/>
    <property type="match status" value="1"/>
</dbReference>
<dbReference type="CDD" id="cd09147">
    <property type="entry name" value="PLDc_vPLD3_2"/>
    <property type="match status" value="1"/>
</dbReference>
<dbReference type="FunFam" id="3.30.870.10:FF:000013">
    <property type="entry name" value="phospholipase D3 isoform X1"/>
    <property type="match status" value="1"/>
</dbReference>
<dbReference type="FunFam" id="3.30.870.10:FF:000019">
    <property type="entry name" value="phospholipase D3 isoform X1"/>
    <property type="match status" value="1"/>
</dbReference>
<dbReference type="Gene3D" id="3.30.870.10">
    <property type="entry name" value="Endonuclease Chain A"/>
    <property type="match status" value="2"/>
</dbReference>
<dbReference type="InterPro" id="IPR050874">
    <property type="entry name" value="Diverse_PLD-related"/>
</dbReference>
<dbReference type="InterPro" id="IPR032803">
    <property type="entry name" value="PLDc_3"/>
</dbReference>
<dbReference type="InterPro" id="IPR001736">
    <property type="entry name" value="PLipase_D/transphosphatidylase"/>
</dbReference>
<dbReference type="PANTHER" id="PTHR10185:SF16">
    <property type="entry name" value="5'-3' EXONUCLEASE PLD3"/>
    <property type="match status" value="1"/>
</dbReference>
<dbReference type="PANTHER" id="PTHR10185">
    <property type="entry name" value="PHOSPHOLIPASE D - RELATED"/>
    <property type="match status" value="1"/>
</dbReference>
<dbReference type="Pfam" id="PF13918">
    <property type="entry name" value="PLDc_3"/>
    <property type="match status" value="1"/>
</dbReference>
<dbReference type="SMART" id="SM00155">
    <property type="entry name" value="PLDc"/>
    <property type="match status" value="2"/>
</dbReference>
<dbReference type="SUPFAM" id="SSF56024">
    <property type="entry name" value="Phospholipase D/nuclease"/>
    <property type="match status" value="2"/>
</dbReference>
<dbReference type="PROSITE" id="PS50035">
    <property type="entry name" value="PLD"/>
    <property type="match status" value="2"/>
</dbReference>
<keyword id="KW-1015">Disulfide bond</keyword>
<keyword id="KW-0256">Endoplasmic reticulum</keyword>
<keyword id="KW-0967">Endosome</keyword>
<keyword id="KW-0269">Exonuclease</keyword>
<keyword id="KW-0325">Glycoprotein</keyword>
<keyword id="KW-0333">Golgi apparatus</keyword>
<keyword id="KW-0378">Hydrolase</keyword>
<keyword id="KW-0391">Immunity</keyword>
<keyword id="KW-0395">Inflammatory response</keyword>
<keyword id="KW-0443">Lipid metabolism</keyword>
<keyword id="KW-0458">Lysosome</keyword>
<keyword id="KW-0460">Magnesium</keyword>
<keyword id="KW-0472">Membrane</keyword>
<keyword id="KW-0479">Metal-binding</keyword>
<keyword id="KW-0540">Nuclease</keyword>
<keyword id="KW-1208">Phospholipid metabolism</keyword>
<keyword id="KW-1185">Reference proteome</keyword>
<keyword id="KW-0677">Repeat</keyword>
<keyword id="KW-0735">Signal-anchor</keyword>
<keyword id="KW-0812">Transmembrane</keyword>
<keyword id="KW-1133">Transmembrane helix</keyword>
<keyword id="KW-0832">Ubl conjugation</keyword>
<organism>
    <name type="scientific">Pongo abelii</name>
    <name type="common">Sumatran orangutan</name>
    <name type="synonym">Pongo pygmaeus abelii</name>
    <dbReference type="NCBI Taxonomy" id="9601"/>
    <lineage>
        <taxon>Eukaryota</taxon>
        <taxon>Metazoa</taxon>
        <taxon>Chordata</taxon>
        <taxon>Craniata</taxon>
        <taxon>Vertebrata</taxon>
        <taxon>Euteleostomi</taxon>
        <taxon>Mammalia</taxon>
        <taxon>Eutheria</taxon>
        <taxon>Euarchontoglires</taxon>
        <taxon>Primates</taxon>
        <taxon>Haplorrhini</taxon>
        <taxon>Catarrhini</taxon>
        <taxon>Hominidae</taxon>
        <taxon>Pongo</taxon>
    </lineage>
</organism>
<protein>
    <recommendedName>
        <fullName>5'-3' exonuclease PLD3</fullName>
        <ecNumber evidence="3">3.1.16.1</ecNumber>
    </recommendedName>
    <alternativeName>
        <fullName>(S,S)-bis(monoacylglycero)phosphate synthase PLD3</fullName>
        <ecNumber evidence="3">3.1.4.-</ecNumber>
    </alternativeName>
    <alternativeName>
        <fullName>Phospholipase D3</fullName>
    </alternativeName>
</protein>
<reference key="1">
    <citation type="submission" date="2004-11" db="EMBL/GenBank/DDBJ databases">
        <authorList>
            <consortium name="The German cDNA consortium"/>
        </authorList>
    </citation>
    <scope>NUCLEOTIDE SEQUENCE [LARGE SCALE MRNA]</scope>
    <source>
        <tissue>Brain cortex</tissue>
    </source>
</reference>
<accession>Q5R4Y7</accession>
<accession>Q5R4R5</accession>
<evidence type="ECO:0000250" key="1">
    <source>
        <dbReference type="UniProtKB" id="O35405"/>
    </source>
</evidence>
<evidence type="ECO:0000250" key="2">
    <source>
        <dbReference type="UniProtKB" id="Q8BG07"/>
    </source>
</evidence>
<evidence type="ECO:0000250" key="3">
    <source>
        <dbReference type="UniProtKB" id="Q8IV08"/>
    </source>
</evidence>
<evidence type="ECO:0000255" key="4">
    <source>
        <dbReference type="PROSITE-ProRule" id="PRU00153"/>
    </source>
</evidence>
<evidence type="ECO:0000305" key="5"/>
<feature type="chain" id="PRO_0000280329" description="5'-3' exonuclease PLD3">
    <location>
        <begin position="1"/>
        <end position="490"/>
    </location>
</feature>
<feature type="topological domain" description="Cytoplasmic" evidence="3">
    <location>
        <begin position="1"/>
        <end position="38"/>
    </location>
</feature>
<feature type="transmembrane region" description="Helical; Signal-anchor for type II membrane protein" evidence="3">
    <location>
        <begin position="39"/>
        <end position="59"/>
    </location>
</feature>
<feature type="topological domain" description="Lumenal" evidence="3">
    <location>
        <begin position="60"/>
        <end position="490"/>
    </location>
</feature>
<feature type="domain" description="PLD phosphodiesterase 1" evidence="4">
    <location>
        <begin position="196"/>
        <end position="223"/>
    </location>
</feature>
<feature type="domain" description="PLD phosphodiesterase 2" evidence="4">
    <location>
        <begin position="411"/>
        <end position="437"/>
    </location>
</feature>
<feature type="active site" evidence="4">
    <location>
        <position position="201"/>
    </location>
</feature>
<feature type="active site" description="Proton donor" evidence="4">
    <location>
        <position position="201"/>
    </location>
</feature>
<feature type="active site" evidence="4">
    <location>
        <position position="203"/>
    </location>
</feature>
<feature type="active site" evidence="4">
    <location>
        <position position="208"/>
    </location>
</feature>
<feature type="active site" description="Nucleophile" evidence="1">
    <location>
        <position position="416"/>
    </location>
</feature>
<feature type="binding site" evidence="1">
    <location>
        <position position="201"/>
    </location>
    <ligand>
        <name>phosphate</name>
        <dbReference type="ChEBI" id="CHEBI:43474"/>
    </ligand>
    <ligandPart>
        <name>5'-phosphate 2'-deoxynucleoside residue</name>
        <dbReference type="ChEBI" id="CHEBI:136412"/>
    </ligandPart>
</feature>
<feature type="binding site" evidence="1">
    <location>
        <position position="203"/>
    </location>
    <ligand>
        <name>phosphate</name>
        <dbReference type="ChEBI" id="CHEBI:43474"/>
    </ligand>
    <ligandPart>
        <name>5'-phosphate 2'-deoxynucleoside residue</name>
        <dbReference type="ChEBI" id="CHEBI:136412"/>
    </ligandPart>
</feature>
<feature type="binding site" evidence="1">
    <location>
        <position position="218"/>
    </location>
    <ligand>
        <name>phosphate</name>
        <dbReference type="ChEBI" id="CHEBI:43474"/>
    </ligand>
    <ligandPart>
        <name>5'-phosphate 2'-deoxynucleoside residue</name>
        <dbReference type="ChEBI" id="CHEBI:136412"/>
    </ligandPart>
</feature>
<feature type="binding site" evidence="1">
    <location>
        <position position="416"/>
    </location>
    <ligand>
        <name>phosphate</name>
        <dbReference type="ChEBI" id="CHEBI:43474"/>
    </ligand>
    <ligandPart>
        <name>5'-phosphate 2'-deoxynucleoside residue</name>
        <dbReference type="ChEBI" id="CHEBI:136412"/>
    </ligandPart>
</feature>
<feature type="binding site" evidence="3">
    <location>
        <position position="438"/>
    </location>
    <ligand>
        <name>Mg(2+)</name>
        <dbReference type="ChEBI" id="CHEBI:18420"/>
    </ligand>
</feature>
<feature type="site" description="Cleavage; by lysosomal cysteine proteases" evidence="3">
    <location>
        <begin position="71"/>
        <end position="72"/>
    </location>
</feature>
<feature type="glycosylation site" description="N-linked (GlcNAc...) asparagine" evidence="3">
    <location>
        <position position="97"/>
    </location>
</feature>
<feature type="glycosylation site" description="N-linked (GlcNAc...) asparagine" evidence="3">
    <location>
        <position position="132"/>
    </location>
</feature>
<feature type="glycosylation site" description="N-linked (GlcNAc...) asparagine" evidence="3">
    <location>
        <position position="236"/>
    </location>
</feature>
<feature type="glycosylation site" description="N-linked (GlcNAc...) asparagine" evidence="3">
    <location>
        <position position="284"/>
    </location>
</feature>
<feature type="glycosylation site" description="N-linked (GlcNAc...) asparagine" evidence="3">
    <location>
        <position position="387"/>
    </location>
</feature>
<feature type="disulfide bond" evidence="1">
    <location>
        <begin position="77"/>
        <end position="239"/>
    </location>
</feature>
<feature type="disulfide bond" evidence="1">
    <location>
        <begin position="81"/>
        <end position="237"/>
    </location>
</feature>
<feature type="disulfide bond" evidence="1">
    <location>
        <begin position="366"/>
        <end position="487"/>
    </location>
</feature>
<feature type="sequence conflict" description="In Ref. 1; CAH93251." evidence="5" ref="1">
    <original>L</original>
    <variation>S</variation>
    <location>
        <position position="65"/>
    </location>
</feature>
<feature type="sequence conflict" description="In Ref. 1; CAH93251." evidence="5" ref="1">
    <original>V</original>
    <variation>M</variation>
    <location>
        <position position="165"/>
    </location>
</feature>
<feature type="sequence conflict" description="In Ref. 1; CAH93251." evidence="5" ref="1">
    <original>R</original>
    <variation>G</variation>
    <location>
        <position position="340"/>
    </location>
</feature>
<gene>
    <name type="primary">PLD3</name>
</gene>